<feature type="chain" id="PRO_0000457635" description="Ribonucleoside-diphosphate reductase large subunit">
    <location>
        <begin position="1"/>
        <end position="771"/>
    </location>
</feature>
<feature type="domain" description="ATP-cone" evidence="5">
    <location>
        <begin position="1"/>
        <end position="92"/>
    </location>
</feature>
<feature type="active site" description="Proton acceptor" evidence="3">
    <location>
        <position position="427"/>
    </location>
</feature>
<feature type="active site" description="Cysteine radical intermediate" evidence="3">
    <location>
        <position position="429"/>
    </location>
</feature>
<feature type="active site" description="Proton acceptor" evidence="3">
    <location>
        <position position="431"/>
    </location>
</feature>
<feature type="binding site" evidence="4">
    <location>
        <begin position="5"/>
        <end position="6"/>
    </location>
    <ligand>
        <name>ATP</name>
        <dbReference type="ChEBI" id="CHEBI:30616"/>
        <note>allosteric activator</note>
    </ligand>
</feature>
<feature type="binding site" evidence="4">
    <location>
        <begin position="11"/>
        <end position="17"/>
    </location>
    <ligand>
        <name>ATP</name>
        <dbReference type="ChEBI" id="CHEBI:30616"/>
        <note>allosteric activator</note>
    </ligand>
</feature>
<feature type="binding site" evidence="4">
    <location>
        <position position="53"/>
    </location>
    <ligand>
        <name>ATP</name>
        <dbReference type="ChEBI" id="CHEBI:30616"/>
        <note>allosteric activator</note>
    </ligand>
</feature>
<feature type="binding site" evidence="4">
    <location>
        <position position="57"/>
    </location>
    <ligand>
        <name>ATP</name>
        <dbReference type="ChEBI" id="CHEBI:30616"/>
        <note>allosteric activator</note>
    </ligand>
</feature>
<feature type="binding site" evidence="1">
    <location>
        <position position="88"/>
    </location>
    <ligand>
        <name>ATP</name>
        <dbReference type="ChEBI" id="CHEBI:30616"/>
        <note>allosteric activator</note>
    </ligand>
</feature>
<feature type="binding site" evidence="4">
    <location>
        <position position="202"/>
    </location>
    <ligand>
        <name>GDP</name>
        <dbReference type="ChEBI" id="CHEBI:58189"/>
    </ligand>
</feature>
<feature type="binding site" evidence="4">
    <location>
        <position position="217"/>
    </location>
    <ligand>
        <name>GDP</name>
        <dbReference type="ChEBI" id="CHEBI:58189"/>
    </ligand>
</feature>
<feature type="binding site" evidence="4">
    <location>
        <begin position="226"/>
        <end position="228"/>
    </location>
    <ligand>
        <name>dTTP</name>
        <dbReference type="ChEBI" id="CHEBI:37568"/>
        <note>allosteric effector that controls substrate specificity</note>
    </ligand>
</feature>
<feature type="binding site" evidence="4">
    <location>
        <position position="243"/>
    </location>
    <ligand>
        <name>dTTP</name>
        <dbReference type="ChEBI" id="CHEBI:37568"/>
        <note>allosteric effector that controls substrate specificity</note>
    </ligand>
</feature>
<feature type="binding site" evidence="4">
    <location>
        <position position="256"/>
    </location>
    <ligand>
        <name>dTTP</name>
        <dbReference type="ChEBI" id="CHEBI:37568"/>
        <note>allosteric effector that controls substrate specificity</note>
    </ligand>
</feature>
<feature type="binding site" evidence="4">
    <location>
        <position position="427"/>
    </location>
    <ligand>
        <name>GDP</name>
        <dbReference type="ChEBI" id="CHEBI:58189"/>
    </ligand>
</feature>
<feature type="binding site" evidence="4">
    <location>
        <position position="431"/>
    </location>
    <ligand>
        <name>GDP</name>
        <dbReference type="ChEBI" id="CHEBI:58189"/>
    </ligand>
</feature>
<feature type="binding site" evidence="4">
    <location>
        <begin position="603"/>
        <end position="606"/>
    </location>
    <ligand>
        <name>GDP</name>
        <dbReference type="ChEBI" id="CHEBI:58189"/>
    </ligand>
</feature>
<dbReference type="EC" id="1.17.4.1" evidence="2 6"/>
<dbReference type="EMBL" id="MT903340">
    <property type="protein sequence ID" value="QNP12935.1"/>
    <property type="molecule type" value="Genomic_DNA"/>
</dbReference>
<dbReference type="RefSeq" id="YP_010377062.1">
    <property type="nucleotide sequence ID" value="NC_063383.1"/>
</dbReference>
<dbReference type="SMR" id="A0A7H0DN52"/>
<dbReference type="GeneID" id="72551475"/>
<dbReference type="Proteomes" id="UP000516359">
    <property type="component" value="Genome"/>
</dbReference>
<dbReference type="GO" id="GO:0005524">
    <property type="term" value="F:ATP binding"/>
    <property type="evidence" value="ECO:0007669"/>
    <property type="project" value="UniProtKB-KW"/>
</dbReference>
<dbReference type="GO" id="GO:0004748">
    <property type="term" value="F:ribonucleoside-diphosphate reductase activity, thioredoxin disulfide as acceptor"/>
    <property type="evidence" value="ECO:0007669"/>
    <property type="project" value="InterPro"/>
</dbReference>
<dbReference type="GO" id="GO:0009263">
    <property type="term" value="P:deoxyribonucleotide biosynthetic process"/>
    <property type="evidence" value="ECO:0007669"/>
    <property type="project" value="UniProtKB-KW"/>
</dbReference>
<dbReference type="CDD" id="cd01679">
    <property type="entry name" value="RNR_I"/>
    <property type="match status" value="1"/>
</dbReference>
<dbReference type="FunFam" id="3.20.70.20:FF:000010">
    <property type="entry name" value="Ribonucleoside-diphosphate reductase"/>
    <property type="match status" value="1"/>
</dbReference>
<dbReference type="Gene3D" id="3.20.70.20">
    <property type="match status" value="1"/>
</dbReference>
<dbReference type="InterPro" id="IPR005144">
    <property type="entry name" value="ATP-cone_dom"/>
</dbReference>
<dbReference type="InterPro" id="IPR013346">
    <property type="entry name" value="NrdE_NrdA_C"/>
</dbReference>
<dbReference type="InterPro" id="IPR000788">
    <property type="entry name" value="RNR_lg_C"/>
</dbReference>
<dbReference type="InterPro" id="IPR013509">
    <property type="entry name" value="RNR_lsu_N"/>
</dbReference>
<dbReference type="InterPro" id="IPR008926">
    <property type="entry name" value="RNR_R1-su_N"/>
</dbReference>
<dbReference type="InterPro" id="IPR039718">
    <property type="entry name" value="Rrm1"/>
</dbReference>
<dbReference type="NCBIfam" id="TIGR02506">
    <property type="entry name" value="NrdE_NrdA"/>
    <property type="match status" value="1"/>
</dbReference>
<dbReference type="PANTHER" id="PTHR11573">
    <property type="entry name" value="RIBONUCLEOSIDE-DIPHOSPHATE REDUCTASE LARGE CHAIN"/>
    <property type="match status" value="1"/>
</dbReference>
<dbReference type="PANTHER" id="PTHR11573:SF6">
    <property type="entry name" value="RIBONUCLEOSIDE-DIPHOSPHATE REDUCTASE LARGE SUBUNIT"/>
    <property type="match status" value="1"/>
</dbReference>
<dbReference type="Pfam" id="PF03477">
    <property type="entry name" value="ATP-cone"/>
    <property type="match status" value="1"/>
</dbReference>
<dbReference type="Pfam" id="PF02867">
    <property type="entry name" value="Ribonuc_red_lgC"/>
    <property type="match status" value="1"/>
</dbReference>
<dbReference type="Pfam" id="PF00317">
    <property type="entry name" value="Ribonuc_red_lgN"/>
    <property type="match status" value="1"/>
</dbReference>
<dbReference type="PRINTS" id="PR01183">
    <property type="entry name" value="RIBORDTASEM1"/>
</dbReference>
<dbReference type="SUPFAM" id="SSF51998">
    <property type="entry name" value="PFL-like glycyl radical enzymes"/>
    <property type="match status" value="1"/>
</dbReference>
<dbReference type="SUPFAM" id="SSF48168">
    <property type="entry name" value="R1 subunit of ribonucleotide reductase, N-terminal domain"/>
    <property type="match status" value="1"/>
</dbReference>
<dbReference type="PROSITE" id="PS51161">
    <property type="entry name" value="ATP_CONE"/>
    <property type="match status" value="1"/>
</dbReference>
<dbReference type="PROSITE" id="PS00089">
    <property type="entry name" value="RIBORED_LARGE"/>
    <property type="match status" value="1"/>
</dbReference>
<sequence>MFVIKRNGYKENVMFDKITSRIRKLCYGLNTDHIDPIKIAMKVIQGIYNGVTTVELDTLAAEIAATCTTQHPDYAILAARIAISNLHKETKKLFSEVMEDLFNYVNPKNGKHSPIISSITMDIVNKYKDKLNSVIIYERDFSYNYFGFKTLEKSYLLKINNKIVERPQHMLMRVAVGIHQWDIDSAIETYNLLSEKWFTHASPTLFNAGTTRHQMSSCFLLNMIDDSIEGIYDTLKRCALISKMAGGIGLSISNIRASGSYISGTNGISNGIIPMLRVYNNTARYIDQGGNKRPGVMAIYLEPWHSDIMAFLDLKKNTGNDEHRTRDLFIALWIPDLFMKRVKDDGEWSLMCPDECPGLDNVWGDEFERLYTLYERERRYKCIIKARVVWKAIIESQIETGTPFILYKDACNKKSNQQNLGTIKCSNLCTEIIQYADANEVAVCNLASVALNMFVIDGRFDFLKLKDVVKVIVRNLNKIIDINYYPIPEAEISNKRHRPIGIGVQGLADAFILLNYPFDSLEAQDLNKKIFETIYYGALEASCKLAEKEGPYDTYVGSYASNGILQYDLWNVVPSDLWNWEPLKDKIRTYGLRNSLLVAPMPTASTAQILGNNESVEPYTSNIYTRRVLSGEFQVVNPHLLRVLTERKLWNDEIKNRIMVDGGSIQNTNLPEDIKRVYKTIWEIPQKTIIKMAADRGAFIDQSQSMNIHIADPSYSKLTSMHFYGWSLGLKTGMYYLRTKPASAPIQFTLDKDKIKPQVVCDSEICTSCSG</sequence>
<reference key="1">
    <citation type="journal article" date="2022" name="J. Infect. Dis.">
        <title>Exportation of Monkeypox virus from the African continent.</title>
        <authorList>
            <person name="Mauldin M.R."/>
            <person name="McCollum A.M."/>
            <person name="Nakazawa Y.J."/>
            <person name="Mandra A."/>
            <person name="Whitehouse E.R."/>
            <person name="Davidson W."/>
            <person name="Zhao H."/>
            <person name="Gao J."/>
            <person name="Li Y."/>
            <person name="Doty J."/>
            <person name="Yinka-Ogunleye A."/>
            <person name="Akinpelu A."/>
            <person name="Aruna O."/>
            <person name="Naidoo D."/>
            <person name="Lewandowski K."/>
            <person name="Afrough B."/>
            <person name="Graham V."/>
            <person name="Aarons E."/>
            <person name="Hewson R."/>
            <person name="Vipond R."/>
            <person name="Dunning J."/>
            <person name="Chand M."/>
            <person name="Brown C."/>
            <person name="Cohen-Gihon I."/>
            <person name="Erez N."/>
            <person name="Shifman O."/>
            <person name="Israeli O."/>
            <person name="Sharon M."/>
            <person name="Schwartz E."/>
            <person name="Beth-Din A."/>
            <person name="Zvi A."/>
            <person name="Mak T.M."/>
            <person name="Ng Y.K."/>
            <person name="Cui L."/>
            <person name="Lin R.T.P."/>
            <person name="Olson V.A."/>
            <person name="Brooks T."/>
            <person name="Paran N."/>
            <person name="Ihekweazu C."/>
            <person name="Reynolds M.G."/>
        </authorList>
    </citation>
    <scope>NUCLEOTIDE SEQUENCE [LARGE SCALE GENOMIC DNA]</scope>
    <source>
        <strain>MPXV-M5312_HM12_Rivers</strain>
    </source>
</reference>
<accession>A0A7H0DN52</accession>
<proteinExistence type="inferred from homology"/>
<organism>
    <name type="scientific">Monkeypox virus</name>
    <dbReference type="NCBI Taxonomy" id="10244"/>
    <lineage>
        <taxon>Viruses</taxon>
        <taxon>Varidnaviria</taxon>
        <taxon>Bamfordvirae</taxon>
        <taxon>Nucleocytoviricota</taxon>
        <taxon>Pokkesviricetes</taxon>
        <taxon>Chitovirales</taxon>
        <taxon>Poxviridae</taxon>
        <taxon>Chordopoxvirinae</taxon>
        <taxon>Orthopoxvirus</taxon>
    </lineage>
</organism>
<evidence type="ECO:0000250" key="1">
    <source>
        <dbReference type="UniProtKB" id="P00452"/>
    </source>
</evidence>
<evidence type="ECO:0000250" key="2">
    <source>
        <dbReference type="UniProtKB" id="P12848"/>
    </source>
</evidence>
<evidence type="ECO:0000250" key="3">
    <source>
        <dbReference type="UniProtKB" id="P21524"/>
    </source>
</evidence>
<evidence type="ECO:0000250" key="4">
    <source>
        <dbReference type="UniProtKB" id="P23921"/>
    </source>
</evidence>
<evidence type="ECO:0000255" key="5">
    <source>
        <dbReference type="PROSITE-ProRule" id="PRU00492"/>
    </source>
</evidence>
<evidence type="ECO:0000255" key="6">
    <source>
        <dbReference type="RuleBase" id="RU003410"/>
    </source>
</evidence>
<evidence type="ECO:0000305" key="7"/>
<keyword id="KW-0021">Allosteric enzyme</keyword>
<keyword id="KW-0067">ATP-binding</keyword>
<keyword id="KW-0215">Deoxyribonucleotide synthesis</keyword>
<keyword id="KW-0244">Early protein</keyword>
<keyword id="KW-0460">Magnesium</keyword>
<keyword id="KW-0547">Nucleotide-binding</keyword>
<keyword id="KW-0560">Oxidoreductase</keyword>
<keyword id="KW-1185">Reference proteome</keyword>
<gene>
    <name type="primary">OPG080</name>
    <name type="ORF">MPXVgp065</name>
</gene>
<name>RIR1_MONPV</name>
<comment type="function">
    <text evidence="2">Ribonucleoside-diphosphate reductase holoenzyme provides the precursors necessary for viral DNA synthesis. Allows virus growth in non-dividing cells. Catalyzes the biosynthesis of deoxyribonucleotides from the corresponding ribonucleotides.</text>
</comment>
<comment type="catalytic activity">
    <reaction evidence="2">
        <text>a 2'-deoxyribonucleoside 5'-diphosphate + [thioredoxin]-disulfide + H2O = a ribonucleoside 5'-diphosphate + [thioredoxin]-dithiol</text>
        <dbReference type="Rhea" id="RHEA:23252"/>
        <dbReference type="Rhea" id="RHEA-COMP:10698"/>
        <dbReference type="Rhea" id="RHEA-COMP:10700"/>
        <dbReference type="ChEBI" id="CHEBI:15377"/>
        <dbReference type="ChEBI" id="CHEBI:29950"/>
        <dbReference type="ChEBI" id="CHEBI:50058"/>
        <dbReference type="ChEBI" id="CHEBI:57930"/>
        <dbReference type="ChEBI" id="CHEBI:73316"/>
        <dbReference type="EC" id="1.17.4.1"/>
    </reaction>
    <physiologicalReaction direction="right-to-left" evidence="2">
        <dbReference type="Rhea" id="RHEA:23254"/>
    </physiologicalReaction>
</comment>
<comment type="cofactor">
    <cofactor evidence="2">
        <name>Mg(2+)</name>
        <dbReference type="ChEBI" id="CHEBI:18420"/>
    </cofactor>
    <text evidence="2">Maximal ribonucleotide reductase activity requires the presence of Mg(2+) ions.</text>
</comment>
<comment type="subunit">
    <text evidence="2">Interacts with RNR2/OPG047 subunit.</text>
</comment>
<comment type="similarity">
    <text evidence="7">Belongs to the ribonucleoside diphosphate reductase large chain family.</text>
</comment>
<organismHost>
    <name type="scientific">Cynomys gunnisoni</name>
    <name type="common">Gunnison's prairie dog</name>
    <name type="synonym">Spermophilus gunnisoni</name>
    <dbReference type="NCBI Taxonomy" id="45479"/>
</organismHost>
<organismHost>
    <name type="scientific">Cynomys leucurus</name>
    <name type="common">White-tailed prairie dog</name>
    <dbReference type="NCBI Taxonomy" id="99825"/>
</organismHost>
<organismHost>
    <name type="scientific">Cynomys ludovicianus</name>
    <name type="common">Black-tailed prairie dog</name>
    <dbReference type="NCBI Taxonomy" id="45480"/>
</organismHost>
<organismHost>
    <name type="scientific">Cynomys mexicanus</name>
    <name type="common">Mexican prairie dog</name>
    <dbReference type="NCBI Taxonomy" id="99826"/>
</organismHost>
<organismHost>
    <name type="scientific">Cynomys parvidens</name>
    <name type="common">Utah prairie dog</name>
    <dbReference type="NCBI Taxonomy" id="99827"/>
</organismHost>
<organismHost>
    <name type="scientific">Gliridae</name>
    <name type="common">dormice</name>
    <dbReference type="NCBI Taxonomy" id="30650"/>
</organismHost>
<organismHost>
    <name type="scientific">Heliosciurus ruwenzorii</name>
    <name type="common">Ruwenzori sun squirrel</name>
    <dbReference type="NCBI Taxonomy" id="226685"/>
</organismHost>
<organismHost>
    <name type="scientific">Homo sapiens</name>
    <name type="common">Human</name>
    <dbReference type="NCBI Taxonomy" id="9606"/>
</organismHost>
<organismHost>
    <name type="scientific">Mus musculus</name>
    <name type="common">Mouse</name>
    <dbReference type="NCBI Taxonomy" id="10090"/>
</organismHost>
<protein>
    <recommendedName>
        <fullName>Ribonucleoside-diphosphate reductase large subunit</fullName>
        <ecNumber evidence="2">1.17.4.1</ecNumber>
    </recommendedName>
    <alternativeName>
        <fullName evidence="6">Ribonucleoside-diphosphate reductase</fullName>
        <ecNumber evidence="6">1.17.4.1</ecNumber>
    </alternativeName>
    <alternativeName>
        <fullName>Ribonucleotide reductase large subunit</fullName>
    </alternativeName>
    <alternativeName>
        <fullName>Ribonucleotide reductase subunit 1</fullName>
        <shortName>RNR1</shortName>
    </alternativeName>
</protein>